<evidence type="ECO:0000255" key="1">
    <source>
        <dbReference type="HAMAP-Rule" id="MF_01363"/>
    </source>
</evidence>
<evidence type="ECO:0000305" key="2"/>
<feature type="chain" id="PRO_1000143792" description="Large ribosomal subunit protein bL21">
    <location>
        <begin position="1"/>
        <end position="103"/>
    </location>
</feature>
<accession>B1XHG2</accession>
<keyword id="KW-0687">Ribonucleoprotein</keyword>
<keyword id="KW-0689">Ribosomal protein</keyword>
<keyword id="KW-0694">RNA-binding</keyword>
<keyword id="KW-0699">rRNA-binding</keyword>
<protein>
    <recommendedName>
        <fullName evidence="1">Large ribosomal subunit protein bL21</fullName>
    </recommendedName>
    <alternativeName>
        <fullName evidence="2">50S ribosomal protein L21</fullName>
    </alternativeName>
</protein>
<organism>
    <name type="scientific">Escherichia coli (strain K12 / DH10B)</name>
    <dbReference type="NCBI Taxonomy" id="316385"/>
    <lineage>
        <taxon>Bacteria</taxon>
        <taxon>Pseudomonadati</taxon>
        <taxon>Pseudomonadota</taxon>
        <taxon>Gammaproteobacteria</taxon>
        <taxon>Enterobacterales</taxon>
        <taxon>Enterobacteriaceae</taxon>
        <taxon>Escherichia</taxon>
    </lineage>
</organism>
<comment type="function">
    <text evidence="1">This protein binds to 23S rRNA in the presence of protein L20.</text>
</comment>
<comment type="subunit">
    <text evidence="1">Part of the 50S ribosomal subunit. Contacts protein L20.</text>
</comment>
<comment type="similarity">
    <text evidence="1">Belongs to the bacterial ribosomal protein bL21 family.</text>
</comment>
<sequence length="103" mass="11564">MYAVFQSGGKQHRVSEGQTVRLEKLDIATGETVEFAEVLMIANGEEVKIGVPFVDGGVIKAEVVAHGRGEKVKIVKFRRRKHYRKQQGHRQWFTDVKITGISA</sequence>
<reference key="1">
    <citation type="journal article" date="2008" name="J. Bacteriol.">
        <title>The complete genome sequence of Escherichia coli DH10B: insights into the biology of a laboratory workhorse.</title>
        <authorList>
            <person name="Durfee T."/>
            <person name="Nelson R."/>
            <person name="Baldwin S."/>
            <person name="Plunkett G. III"/>
            <person name="Burland V."/>
            <person name="Mau B."/>
            <person name="Petrosino J.F."/>
            <person name="Qin X."/>
            <person name="Muzny D.M."/>
            <person name="Ayele M."/>
            <person name="Gibbs R.A."/>
            <person name="Csorgo B."/>
            <person name="Posfai G."/>
            <person name="Weinstock G.M."/>
            <person name="Blattner F.R."/>
        </authorList>
    </citation>
    <scope>NUCLEOTIDE SEQUENCE [LARGE SCALE GENOMIC DNA]</scope>
    <source>
        <strain>K12 / DH10B</strain>
    </source>
</reference>
<gene>
    <name evidence="1" type="primary">rplU</name>
    <name type="ordered locus">ECDH10B_3360</name>
</gene>
<name>RL21_ECODH</name>
<proteinExistence type="inferred from homology"/>
<dbReference type="EMBL" id="CP000948">
    <property type="protein sequence ID" value="ACB04263.1"/>
    <property type="molecule type" value="Genomic_DNA"/>
</dbReference>
<dbReference type="RefSeq" id="WP_000271401.1">
    <property type="nucleotide sequence ID" value="NC_010473.1"/>
</dbReference>
<dbReference type="SMR" id="B1XHG2"/>
<dbReference type="GeneID" id="93778795"/>
<dbReference type="KEGG" id="ecd:ECDH10B_3360"/>
<dbReference type="HOGENOM" id="CLU_061463_3_3_6"/>
<dbReference type="GO" id="GO:0005737">
    <property type="term" value="C:cytoplasm"/>
    <property type="evidence" value="ECO:0007669"/>
    <property type="project" value="UniProtKB-ARBA"/>
</dbReference>
<dbReference type="GO" id="GO:1990904">
    <property type="term" value="C:ribonucleoprotein complex"/>
    <property type="evidence" value="ECO:0007669"/>
    <property type="project" value="UniProtKB-KW"/>
</dbReference>
<dbReference type="GO" id="GO:0005840">
    <property type="term" value="C:ribosome"/>
    <property type="evidence" value="ECO:0007669"/>
    <property type="project" value="UniProtKB-KW"/>
</dbReference>
<dbReference type="GO" id="GO:0019843">
    <property type="term" value="F:rRNA binding"/>
    <property type="evidence" value="ECO:0007669"/>
    <property type="project" value="UniProtKB-UniRule"/>
</dbReference>
<dbReference type="GO" id="GO:0003735">
    <property type="term" value="F:structural constituent of ribosome"/>
    <property type="evidence" value="ECO:0007669"/>
    <property type="project" value="InterPro"/>
</dbReference>
<dbReference type="GO" id="GO:0006412">
    <property type="term" value="P:translation"/>
    <property type="evidence" value="ECO:0007669"/>
    <property type="project" value="UniProtKB-UniRule"/>
</dbReference>
<dbReference type="HAMAP" id="MF_01363">
    <property type="entry name" value="Ribosomal_bL21"/>
    <property type="match status" value="1"/>
</dbReference>
<dbReference type="InterPro" id="IPR028909">
    <property type="entry name" value="bL21-like"/>
</dbReference>
<dbReference type="InterPro" id="IPR036164">
    <property type="entry name" value="bL21-like_sf"/>
</dbReference>
<dbReference type="InterPro" id="IPR001787">
    <property type="entry name" value="Ribosomal_bL21"/>
</dbReference>
<dbReference type="InterPro" id="IPR018258">
    <property type="entry name" value="Ribosomal_bL21_CS"/>
</dbReference>
<dbReference type="NCBIfam" id="TIGR00061">
    <property type="entry name" value="L21"/>
    <property type="match status" value="1"/>
</dbReference>
<dbReference type="PANTHER" id="PTHR21349">
    <property type="entry name" value="50S RIBOSOMAL PROTEIN L21"/>
    <property type="match status" value="1"/>
</dbReference>
<dbReference type="PANTHER" id="PTHR21349:SF0">
    <property type="entry name" value="LARGE RIBOSOMAL SUBUNIT PROTEIN BL21M"/>
    <property type="match status" value="1"/>
</dbReference>
<dbReference type="Pfam" id="PF00829">
    <property type="entry name" value="Ribosomal_L21p"/>
    <property type="match status" value="1"/>
</dbReference>
<dbReference type="SUPFAM" id="SSF141091">
    <property type="entry name" value="L21p-like"/>
    <property type="match status" value="1"/>
</dbReference>
<dbReference type="PROSITE" id="PS01169">
    <property type="entry name" value="RIBOSOMAL_L21"/>
    <property type="match status" value="1"/>
</dbReference>